<comment type="function">
    <text>Snake venom phospholipase A2 (PLA2) that inhibits neuromuscular transmission by blocking acetylcholine release from the nerve termini. PLA2 catalyzes the calcium-dependent hydrolysis of the 2-acyl groups in 3-sn-phosphoglycerides.</text>
</comment>
<comment type="catalytic activity">
    <reaction evidence="2 3">
        <text>a 1,2-diacyl-sn-glycero-3-phosphocholine + H2O = a 1-acyl-sn-glycero-3-phosphocholine + a fatty acid + H(+)</text>
        <dbReference type="Rhea" id="RHEA:15801"/>
        <dbReference type="ChEBI" id="CHEBI:15377"/>
        <dbReference type="ChEBI" id="CHEBI:15378"/>
        <dbReference type="ChEBI" id="CHEBI:28868"/>
        <dbReference type="ChEBI" id="CHEBI:57643"/>
        <dbReference type="ChEBI" id="CHEBI:58168"/>
        <dbReference type="EC" id="3.1.1.4"/>
    </reaction>
</comment>
<comment type="cofactor">
    <cofactor evidence="1">
        <name>Ca(2+)</name>
        <dbReference type="ChEBI" id="CHEBI:29108"/>
    </cofactor>
    <text evidence="1">Binds 1 Ca(2+) ion.</text>
</comment>
<comment type="subcellular location">
    <subcellularLocation>
        <location>Secreted</location>
    </subcellularLocation>
</comment>
<comment type="tissue specificity">
    <text>Expressed by the venom gland.</text>
</comment>
<comment type="PTM">
    <text>Seven disulfide bonds are present.</text>
</comment>
<comment type="similarity">
    <text evidence="4">Belongs to the phospholipase A2 family. Group II subfamily.</text>
</comment>
<evidence type="ECO:0000250" key="1"/>
<evidence type="ECO:0000255" key="2">
    <source>
        <dbReference type="PROSITE-ProRule" id="PRU10035"/>
    </source>
</evidence>
<evidence type="ECO:0000255" key="3">
    <source>
        <dbReference type="PROSITE-ProRule" id="PRU10036"/>
    </source>
</evidence>
<evidence type="ECO:0000305" key="4"/>
<keyword id="KW-0106">Calcium</keyword>
<keyword id="KW-0903">Direct protein sequencing</keyword>
<keyword id="KW-1015">Disulfide bond</keyword>
<keyword id="KW-0378">Hydrolase</keyword>
<keyword id="KW-0442">Lipid degradation</keyword>
<keyword id="KW-0443">Lipid metabolism</keyword>
<keyword id="KW-0528">Neurotoxin</keyword>
<keyword id="KW-0638">Presynaptic neurotoxin</keyword>
<keyword id="KW-0964">Secreted</keyword>
<keyword id="KW-0800">Toxin</keyword>
<protein>
    <recommendedName>
        <fullName>Phospholipase A2</fullName>
        <shortName>svPLA2</shortName>
        <ecNumber>3.1.1.4</ecNumber>
    </recommendedName>
    <alternativeName>
        <fullName>Phosphatidylcholine 2-acylhydrolase</fullName>
    </alternativeName>
</protein>
<reference key="1">
    <citation type="journal article" date="1981" name="Dong Wu Xue Yan Jiu">
        <title>The amino acid composition and the N-terminal partial sequence of the toxic phospholipase A of Vipera russelli siamensis venom (from Fujian province).</title>
        <authorList>
            <person name="Tu G.C."/>
            <person name="Ran Y.L."/>
            <person name="Zhang Y.S."/>
            <person name="Chen Y.-C."/>
            <person name="Liu K.F."/>
        </authorList>
    </citation>
    <scope>PROTEIN SEQUENCE</scope>
    <source>
        <tissue>Venom</tissue>
    </source>
</reference>
<organism>
    <name type="scientific">Daboia siamensis</name>
    <name type="common">Eastern Russel's viper</name>
    <name type="synonym">Daboia russelii siamensis</name>
    <dbReference type="NCBI Taxonomy" id="343250"/>
    <lineage>
        <taxon>Eukaryota</taxon>
        <taxon>Metazoa</taxon>
        <taxon>Chordata</taxon>
        <taxon>Craniata</taxon>
        <taxon>Vertebrata</taxon>
        <taxon>Euteleostomi</taxon>
        <taxon>Lepidosauria</taxon>
        <taxon>Squamata</taxon>
        <taxon>Bifurcata</taxon>
        <taxon>Unidentata</taxon>
        <taxon>Episquamata</taxon>
        <taxon>Toxicofera</taxon>
        <taxon>Serpentes</taxon>
        <taxon>Colubroidea</taxon>
        <taxon>Viperidae</taxon>
        <taxon>Viperinae</taxon>
        <taxon>Daboia</taxon>
    </lineage>
</organism>
<proteinExistence type="evidence at protein level"/>
<name>PA2_DABSI</name>
<sequence length="22" mass="2659">NLFQFARMINKKLGAFXFXNYI</sequence>
<feature type="chain" id="PRO_0000161718" description="Phospholipase A2">
    <location>
        <begin position="1"/>
        <end position="22" status="greater than"/>
    </location>
</feature>
<feature type="non-terminal residue">
    <location>
        <position position="22"/>
    </location>
</feature>
<accession>P18999</accession>
<dbReference type="EC" id="3.1.1.4"/>
<dbReference type="PIR" id="JC0009">
    <property type="entry name" value="JC0009"/>
</dbReference>
<dbReference type="GO" id="GO:0005576">
    <property type="term" value="C:extracellular region"/>
    <property type="evidence" value="ECO:0007669"/>
    <property type="project" value="UniProtKB-SubCell"/>
</dbReference>
<dbReference type="GO" id="GO:0004623">
    <property type="term" value="F:phospholipase A2 activity"/>
    <property type="evidence" value="ECO:0007669"/>
    <property type="project" value="UniProtKB-EC"/>
</dbReference>
<dbReference type="GO" id="GO:0090729">
    <property type="term" value="F:toxin activity"/>
    <property type="evidence" value="ECO:0007669"/>
    <property type="project" value="UniProtKB-KW"/>
</dbReference>
<dbReference type="GO" id="GO:0016042">
    <property type="term" value="P:lipid catabolic process"/>
    <property type="evidence" value="ECO:0007669"/>
    <property type="project" value="UniProtKB-KW"/>
</dbReference>